<feature type="chain" id="PRO_1000018252" description="Tryptophan synthase alpha chain">
    <location>
        <begin position="1"/>
        <end position="268"/>
    </location>
</feature>
<feature type="active site" description="Proton acceptor" evidence="1">
    <location>
        <position position="49"/>
    </location>
</feature>
<feature type="active site" description="Proton acceptor" evidence="1">
    <location>
        <position position="60"/>
    </location>
</feature>
<dbReference type="EC" id="4.2.1.20" evidence="1"/>
<dbReference type="EMBL" id="CP000744">
    <property type="protein sequence ID" value="ABR80868.1"/>
    <property type="molecule type" value="Genomic_DNA"/>
</dbReference>
<dbReference type="RefSeq" id="WP_003157285.1">
    <property type="nucleotide sequence ID" value="NC_009656.1"/>
</dbReference>
<dbReference type="SMR" id="A6UX98"/>
<dbReference type="GeneID" id="77218578"/>
<dbReference type="KEGG" id="pap:PSPA7_0037"/>
<dbReference type="HOGENOM" id="CLU_016734_0_4_6"/>
<dbReference type="UniPathway" id="UPA00035">
    <property type="reaction ID" value="UER00044"/>
</dbReference>
<dbReference type="Proteomes" id="UP000001582">
    <property type="component" value="Chromosome"/>
</dbReference>
<dbReference type="GO" id="GO:0005829">
    <property type="term" value="C:cytosol"/>
    <property type="evidence" value="ECO:0007669"/>
    <property type="project" value="TreeGrafter"/>
</dbReference>
<dbReference type="GO" id="GO:0004834">
    <property type="term" value="F:tryptophan synthase activity"/>
    <property type="evidence" value="ECO:0007669"/>
    <property type="project" value="UniProtKB-UniRule"/>
</dbReference>
<dbReference type="CDD" id="cd04724">
    <property type="entry name" value="Tryptophan_synthase_alpha"/>
    <property type="match status" value="1"/>
</dbReference>
<dbReference type="FunFam" id="3.20.20.70:FF:000037">
    <property type="entry name" value="Tryptophan synthase alpha chain"/>
    <property type="match status" value="1"/>
</dbReference>
<dbReference type="Gene3D" id="3.20.20.70">
    <property type="entry name" value="Aldolase class I"/>
    <property type="match status" value="1"/>
</dbReference>
<dbReference type="HAMAP" id="MF_00131">
    <property type="entry name" value="Trp_synth_alpha"/>
    <property type="match status" value="1"/>
</dbReference>
<dbReference type="InterPro" id="IPR013785">
    <property type="entry name" value="Aldolase_TIM"/>
</dbReference>
<dbReference type="InterPro" id="IPR011060">
    <property type="entry name" value="RibuloseP-bd_barrel"/>
</dbReference>
<dbReference type="InterPro" id="IPR018204">
    <property type="entry name" value="Trp_synthase_alpha_AS"/>
</dbReference>
<dbReference type="InterPro" id="IPR002028">
    <property type="entry name" value="Trp_synthase_suA"/>
</dbReference>
<dbReference type="NCBIfam" id="TIGR00262">
    <property type="entry name" value="trpA"/>
    <property type="match status" value="1"/>
</dbReference>
<dbReference type="PANTHER" id="PTHR43406:SF1">
    <property type="entry name" value="TRYPTOPHAN SYNTHASE ALPHA CHAIN, CHLOROPLASTIC"/>
    <property type="match status" value="1"/>
</dbReference>
<dbReference type="PANTHER" id="PTHR43406">
    <property type="entry name" value="TRYPTOPHAN SYNTHASE, ALPHA CHAIN"/>
    <property type="match status" value="1"/>
</dbReference>
<dbReference type="Pfam" id="PF00290">
    <property type="entry name" value="Trp_syntA"/>
    <property type="match status" value="1"/>
</dbReference>
<dbReference type="SUPFAM" id="SSF51366">
    <property type="entry name" value="Ribulose-phoshate binding barrel"/>
    <property type="match status" value="1"/>
</dbReference>
<dbReference type="PROSITE" id="PS00167">
    <property type="entry name" value="TRP_SYNTHASE_ALPHA"/>
    <property type="match status" value="1"/>
</dbReference>
<sequence length="268" mass="28404">MSRLQTRFAQLKQDNRAALVTFVTAGDPDYDASLEILKGLPAAGADVIELGMPFTDPMADGPAIQLANIRALQGGQTLAKTLRMVREFRAGDSDTPLVLMGYFNPIHHYGVERFVTEAKEAGVDGLIVVDLPPEHNEDLCHPAQAAGIDFIRLTTPTTGDERLPTVLEGSSGFVYYVSVAGVTGANAATLEHVEEAVARLRRHTDLPIGIGFGIRSAEHAAAVARLADGVVVGSALIERIAKAGDTARAVKDVLALCGELAEGVRNAR</sequence>
<reference key="1">
    <citation type="submission" date="2007-06" db="EMBL/GenBank/DDBJ databases">
        <authorList>
            <person name="Dodson R.J."/>
            <person name="Harkins D."/>
            <person name="Paulsen I.T."/>
        </authorList>
    </citation>
    <scope>NUCLEOTIDE SEQUENCE [LARGE SCALE GENOMIC DNA]</scope>
    <source>
        <strain>DSM 24068 / PA7</strain>
    </source>
</reference>
<protein>
    <recommendedName>
        <fullName evidence="1">Tryptophan synthase alpha chain</fullName>
        <ecNumber evidence="1">4.2.1.20</ecNumber>
    </recommendedName>
</protein>
<accession>A6UX98</accession>
<name>TRPA_PSEP7</name>
<proteinExistence type="inferred from homology"/>
<evidence type="ECO:0000255" key="1">
    <source>
        <dbReference type="HAMAP-Rule" id="MF_00131"/>
    </source>
</evidence>
<comment type="function">
    <text evidence="1">The alpha subunit is responsible for the aldol cleavage of indoleglycerol phosphate to indole and glyceraldehyde 3-phosphate.</text>
</comment>
<comment type="catalytic activity">
    <reaction evidence="1">
        <text>(1S,2R)-1-C-(indol-3-yl)glycerol 3-phosphate + L-serine = D-glyceraldehyde 3-phosphate + L-tryptophan + H2O</text>
        <dbReference type="Rhea" id="RHEA:10532"/>
        <dbReference type="ChEBI" id="CHEBI:15377"/>
        <dbReference type="ChEBI" id="CHEBI:33384"/>
        <dbReference type="ChEBI" id="CHEBI:57912"/>
        <dbReference type="ChEBI" id="CHEBI:58866"/>
        <dbReference type="ChEBI" id="CHEBI:59776"/>
        <dbReference type="EC" id="4.2.1.20"/>
    </reaction>
</comment>
<comment type="pathway">
    <text evidence="1">Amino-acid biosynthesis; L-tryptophan biosynthesis; L-tryptophan from chorismate: step 5/5.</text>
</comment>
<comment type="subunit">
    <text evidence="1">Tetramer of two alpha and two beta chains.</text>
</comment>
<comment type="similarity">
    <text evidence="1">Belongs to the TrpA family.</text>
</comment>
<keyword id="KW-0028">Amino-acid biosynthesis</keyword>
<keyword id="KW-0057">Aromatic amino acid biosynthesis</keyword>
<keyword id="KW-0456">Lyase</keyword>
<keyword id="KW-0822">Tryptophan biosynthesis</keyword>
<gene>
    <name evidence="1" type="primary">trpA</name>
    <name type="ordered locus">PSPA7_0037</name>
</gene>
<organism>
    <name type="scientific">Pseudomonas paraeruginosa (strain DSM 24068 / PA7)</name>
    <name type="common">Pseudomonas aeruginosa (strain PA7)</name>
    <dbReference type="NCBI Taxonomy" id="381754"/>
    <lineage>
        <taxon>Bacteria</taxon>
        <taxon>Pseudomonadati</taxon>
        <taxon>Pseudomonadota</taxon>
        <taxon>Gammaproteobacteria</taxon>
        <taxon>Pseudomonadales</taxon>
        <taxon>Pseudomonadaceae</taxon>
        <taxon>Pseudomonas</taxon>
        <taxon>Pseudomonas paraeruginosa</taxon>
    </lineage>
</organism>